<dbReference type="EMBL" id="AE000513">
    <property type="protein sequence ID" value="AAF09781.1"/>
    <property type="molecule type" value="Genomic_DNA"/>
</dbReference>
<dbReference type="PIR" id="B75549">
    <property type="entry name" value="B75549"/>
</dbReference>
<dbReference type="RefSeq" id="NP_293909.1">
    <property type="nucleotide sequence ID" value="NC_001263.1"/>
</dbReference>
<dbReference type="RefSeq" id="WP_010886831.1">
    <property type="nucleotide sequence ID" value="NC_001263.1"/>
</dbReference>
<dbReference type="SMR" id="Q9RXX0"/>
<dbReference type="FunCoup" id="Q9RXX0">
    <property type="interactions" value="227"/>
</dbReference>
<dbReference type="STRING" id="243230.DR_0185"/>
<dbReference type="PaxDb" id="243230-DR_0185"/>
<dbReference type="EnsemblBacteria" id="AAF09781">
    <property type="protein sequence ID" value="AAF09781"/>
    <property type="gene ID" value="DR_0185"/>
</dbReference>
<dbReference type="GeneID" id="69516416"/>
<dbReference type="KEGG" id="dra:DR_0185"/>
<dbReference type="PATRIC" id="fig|243230.17.peg.349"/>
<dbReference type="eggNOG" id="COG0239">
    <property type="taxonomic scope" value="Bacteria"/>
</dbReference>
<dbReference type="HOGENOM" id="CLU_114342_1_1_0"/>
<dbReference type="InParanoid" id="Q9RXX0"/>
<dbReference type="Proteomes" id="UP000002524">
    <property type="component" value="Chromosome 1"/>
</dbReference>
<dbReference type="GO" id="GO:0005886">
    <property type="term" value="C:plasma membrane"/>
    <property type="evidence" value="ECO:0000318"/>
    <property type="project" value="GO_Central"/>
</dbReference>
<dbReference type="GO" id="GO:0062054">
    <property type="term" value="F:fluoride channel activity"/>
    <property type="evidence" value="ECO:0007669"/>
    <property type="project" value="UniProtKB-UniRule"/>
</dbReference>
<dbReference type="GO" id="GO:1903425">
    <property type="term" value="F:fluoride transmembrane transporter activity"/>
    <property type="evidence" value="ECO:0000318"/>
    <property type="project" value="GO_Central"/>
</dbReference>
<dbReference type="GO" id="GO:0046872">
    <property type="term" value="F:metal ion binding"/>
    <property type="evidence" value="ECO:0007669"/>
    <property type="project" value="UniProtKB-KW"/>
</dbReference>
<dbReference type="GO" id="GO:0140114">
    <property type="term" value="P:cellular detoxification of fluoride"/>
    <property type="evidence" value="ECO:0007669"/>
    <property type="project" value="UniProtKB-UniRule"/>
</dbReference>
<dbReference type="GO" id="GO:1903424">
    <property type="term" value="P:fluoride transmembrane transport"/>
    <property type="evidence" value="ECO:0000318"/>
    <property type="project" value="GO_Central"/>
</dbReference>
<dbReference type="HAMAP" id="MF_00454">
    <property type="entry name" value="FluC"/>
    <property type="match status" value="1"/>
</dbReference>
<dbReference type="InterPro" id="IPR003691">
    <property type="entry name" value="FluC"/>
</dbReference>
<dbReference type="PANTHER" id="PTHR28259">
    <property type="entry name" value="FLUORIDE EXPORT PROTEIN 1-RELATED"/>
    <property type="match status" value="1"/>
</dbReference>
<dbReference type="PANTHER" id="PTHR28259:SF1">
    <property type="entry name" value="FLUORIDE EXPORT PROTEIN 1-RELATED"/>
    <property type="match status" value="1"/>
</dbReference>
<dbReference type="Pfam" id="PF02537">
    <property type="entry name" value="CRCB"/>
    <property type="match status" value="1"/>
</dbReference>
<proteinExistence type="inferred from homology"/>
<sequence>MSFPLWLWLALGGAVGAVCRQAAVLLLAPLVARTGFPAAVLLINVLGSFLLGLTLALTGRGVWPEAVRMTFGTGVLGAFTTFSTFSTELDGLLLRGQGGLALAYAALSVGLGLTAAVAGRVLGARL</sequence>
<evidence type="ECO:0000255" key="1">
    <source>
        <dbReference type="HAMAP-Rule" id="MF_00454"/>
    </source>
</evidence>
<name>FLUC_DEIRA</name>
<reference key="1">
    <citation type="journal article" date="1999" name="Science">
        <title>Genome sequence of the radioresistant bacterium Deinococcus radiodurans R1.</title>
        <authorList>
            <person name="White O."/>
            <person name="Eisen J.A."/>
            <person name="Heidelberg J.F."/>
            <person name="Hickey E.K."/>
            <person name="Peterson J.D."/>
            <person name="Dodson R.J."/>
            <person name="Haft D.H."/>
            <person name="Gwinn M.L."/>
            <person name="Nelson W.C."/>
            <person name="Richardson D.L."/>
            <person name="Moffat K.S."/>
            <person name="Qin H."/>
            <person name="Jiang L."/>
            <person name="Pamphile W."/>
            <person name="Crosby M."/>
            <person name="Shen M."/>
            <person name="Vamathevan J.J."/>
            <person name="Lam P."/>
            <person name="McDonald L.A."/>
            <person name="Utterback T.R."/>
            <person name="Zalewski C."/>
            <person name="Makarova K.S."/>
            <person name="Aravind L."/>
            <person name="Daly M.J."/>
            <person name="Minton K.W."/>
            <person name="Fleischmann R.D."/>
            <person name="Ketchum K.A."/>
            <person name="Nelson K.E."/>
            <person name="Salzberg S.L."/>
            <person name="Smith H.O."/>
            <person name="Venter J.C."/>
            <person name="Fraser C.M."/>
        </authorList>
    </citation>
    <scope>NUCLEOTIDE SEQUENCE [LARGE SCALE GENOMIC DNA]</scope>
    <source>
        <strain>ATCC 13939 / DSM 20539 / JCM 16871 / CCUG 27074 / LMG 4051 / NBRC 15346 / NCIMB 9279 / VKM B-1422 / R1</strain>
    </source>
</reference>
<gene>
    <name evidence="1" type="primary">fluC</name>
    <name evidence="1" type="synonym">crcB</name>
    <name type="ordered locus">DR_0185</name>
</gene>
<keyword id="KW-1003">Cell membrane</keyword>
<keyword id="KW-0407">Ion channel</keyword>
<keyword id="KW-0406">Ion transport</keyword>
<keyword id="KW-0472">Membrane</keyword>
<keyword id="KW-0479">Metal-binding</keyword>
<keyword id="KW-1185">Reference proteome</keyword>
<keyword id="KW-0915">Sodium</keyword>
<keyword id="KW-0812">Transmembrane</keyword>
<keyword id="KW-1133">Transmembrane helix</keyword>
<keyword id="KW-0813">Transport</keyword>
<protein>
    <recommendedName>
        <fullName evidence="1">Fluoride-specific ion channel FluC</fullName>
    </recommendedName>
</protein>
<accession>Q9RXX0</accession>
<comment type="function">
    <text evidence="1">Fluoride-specific ion channel. Important for reducing fluoride concentration in the cell, thus reducing its toxicity.</text>
</comment>
<comment type="catalytic activity">
    <reaction evidence="1">
        <text>fluoride(in) = fluoride(out)</text>
        <dbReference type="Rhea" id="RHEA:76159"/>
        <dbReference type="ChEBI" id="CHEBI:17051"/>
    </reaction>
    <physiologicalReaction direction="left-to-right" evidence="1">
        <dbReference type="Rhea" id="RHEA:76160"/>
    </physiologicalReaction>
</comment>
<comment type="activity regulation">
    <text evidence="1">Na(+) is not transported, but it plays an essential structural role and its presence is essential for fluoride channel function.</text>
</comment>
<comment type="subcellular location">
    <subcellularLocation>
        <location evidence="1">Cell membrane</location>
        <topology evidence="1">Multi-pass membrane protein</topology>
    </subcellularLocation>
</comment>
<comment type="similarity">
    <text evidence="1">Belongs to the fluoride channel Fluc/FEX (TC 1.A.43) family.</text>
</comment>
<feature type="chain" id="PRO_0000110094" description="Fluoride-specific ion channel FluC">
    <location>
        <begin position="1"/>
        <end position="126"/>
    </location>
</feature>
<feature type="transmembrane region" description="Helical" evidence="1">
    <location>
        <begin position="7"/>
        <end position="27"/>
    </location>
</feature>
<feature type="transmembrane region" description="Helical" evidence="1">
    <location>
        <begin position="36"/>
        <end position="56"/>
    </location>
</feature>
<feature type="transmembrane region" description="Helical" evidence="1">
    <location>
        <begin position="74"/>
        <end position="94"/>
    </location>
</feature>
<feature type="transmembrane region" description="Helical" evidence="1">
    <location>
        <begin position="98"/>
        <end position="118"/>
    </location>
</feature>
<feature type="binding site" evidence="1">
    <location>
        <position position="77"/>
    </location>
    <ligand>
        <name>Na(+)</name>
        <dbReference type="ChEBI" id="CHEBI:29101"/>
        <note>structural</note>
    </ligand>
</feature>
<feature type="binding site" evidence="1">
    <location>
        <position position="80"/>
    </location>
    <ligand>
        <name>Na(+)</name>
        <dbReference type="ChEBI" id="CHEBI:29101"/>
        <note>structural</note>
    </ligand>
</feature>
<organism>
    <name type="scientific">Deinococcus radiodurans (strain ATCC 13939 / DSM 20539 / JCM 16871 / CCUG 27074 / LMG 4051 / NBRC 15346 / NCIMB 9279 / VKM B-1422 / R1)</name>
    <dbReference type="NCBI Taxonomy" id="243230"/>
    <lineage>
        <taxon>Bacteria</taxon>
        <taxon>Thermotogati</taxon>
        <taxon>Deinococcota</taxon>
        <taxon>Deinococci</taxon>
        <taxon>Deinococcales</taxon>
        <taxon>Deinococcaceae</taxon>
        <taxon>Deinococcus</taxon>
    </lineage>
</organism>